<accession>Q5NDL3</accession>
<proteinExistence type="evidence at transcript level"/>
<name>EOGT_CHICK</name>
<dbReference type="EC" id="2.4.1.255" evidence="2"/>
<dbReference type="EMBL" id="BU415425">
    <property type="status" value="NOT_ANNOTATED_CDS"/>
    <property type="molecule type" value="mRNA"/>
</dbReference>
<dbReference type="EMBL" id="AJ868233">
    <property type="protein sequence ID" value="CAI30568.1"/>
    <property type="molecule type" value="mRNA"/>
</dbReference>
<dbReference type="RefSeq" id="NP_001026580.1">
    <property type="nucleotide sequence ID" value="NM_001031409.1"/>
</dbReference>
<dbReference type="SMR" id="Q5NDL3"/>
<dbReference type="FunCoup" id="Q5NDL3">
    <property type="interactions" value="694"/>
</dbReference>
<dbReference type="STRING" id="9031.ENSGALP00000066468"/>
<dbReference type="CAZy" id="GT61">
    <property type="family name" value="Glycosyltransferase Family 61"/>
</dbReference>
<dbReference type="GlyCosmos" id="Q5NDL3">
    <property type="glycosylation" value="4 sites, No reported glycans"/>
</dbReference>
<dbReference type="GlyGen" id="Q5NDL3">
    <property type="glycosylation" value="4 sites"/>
</dbReference>
<dbReference type="PaxDb" id="9031-ENSGALP00000021829"/>
<dbReference type="GeneID" id="426961"/>
<dbReference type="KEGG" id="gga:426961"/>
<dbReference type="CTD" id="285203"/>
<dbReference type="VEuPathDB" id="HostDB:geneid_426961"/>
<dbReference type="eggNOG" id="KOG4698">
    <property type="taxonomic scope" value="Eukaryota"/>
</dbReference>
<dbReference type="InParanoid" id="Q5NDL3"/>
<dbReference type="OrthoDB" id="529273at2759"/>
<dbReference type="PhylomeDB" id="Q5NDL3"/>
<dbReference type="PRO" id="PR:Q5NDL3"/>
<dbReference type="Proteomes" id="UP000000539">
    <property type="component" value="Unassembled WGS sequence"/>
</dbReference>
<dbReference type="GO" id="GO:0005788">
    <property type="term" value="C:endoplasmic reticulum lumen"/>
    <property type="evidence" value="ECO:0000318"/>
    <property type="project" value="GO_Central"/>
</dbReference>
<dbReference type="GO" id="GO:0097363">
    <property type="term" value="F:protein O-acetylglucosaminyltransferase activity"/>
    <property type="evidence" value="ECO:0000250"/>
    <property type="project" value="UniProtKB"/>
</dbReference>
<dbReference type="GO" id="GO:0097370">
    <property type="term" value="P:protein O-GlcNAcylation via threonine"/>
    <property type="evidence" value="ECO:0000318"/>
    <property type="project" value="GO_Central"/>
</dbReference>
<dbReference type="GO" id="GO:0006493">
    <property type="term" value="P:protein O-linked glycosylation"/>
    <property type="evidence" value="ECO:0000250"/>
    <property type="project" value="UniProtKB"/>
</dbReference>
<dbReference type="InterPro" id="IPR049625">
    <property type="entry name" value="Glyco_transf_61_cat"/>
</dbReference>
<dbReference type="InterPro" id="IPR007657">
    <property type="entry name" value="Glycosyltransferase_61"/>
</dbReference>
<dbReference type="PANTHER" id="PTHR20961:SF148">
    <property type="entry name" value="EGF DOMAIN-SPECIFIC O-LINKED N-ACETYLGLUCOSAMINE TRANSFERASE"/>
    <property type="match status" value="1"/>
</dbReference>
<dbReference type="PANTHER" id="PTHR20961">
    <property type="entry name" value="GLYCOSYLTRANSFERASE"/>
    <property type="match status" value="1"/>
</dbReference>
<dbReference type="Pfam" id="PF04577">
    <property type="entry name" value="Glyco_transf_61"/>
    <property type="match status" value="1"/>
</dbReference>
<evidence type="ECO:0000250" key="1"/>
<evidence type="ECO:0000250" key="2">
    <source>
        <dbReference type="UniProtKB" id="Q8BYW9"/>
    </source>
</evidence>
<evidence type="ECO:0000255" key="3"/>
<evidence type="ECO:0000305" key="4"/>
<feature type="signal peptide" evidence="3">
    <location>
        <begin position="1"/>
        <end position="16"/>
    </location>
</feature>
<feature type="chain" id="PRO_0000301975" description="EGF domain-specific O-linked N-acetylglucosamine transferase">
    <location>
        <begin position="17"/>
        <end position="535"/>
    </location>
</feature>
<feature type="short sequence motif" description="Required for optimal activity" evidence="1">
    <location>
        <begin position="303"/>
        <end position="305"/>
    </location>
</feature>
<feature type="glycosylation site" description="N-linked (GlcNAc...) asparagine" evidence="3">
    <location>
        <position position="22"/>
    </location>
</feature>
<feature type="glycosylation site" description="N-linked (GlcNAc...) asparagine" evidence="3">
    <location>
        <position position="271"/>
    </location>
</feature>
<feature type="glycosylation site" description="N-linked (GlcNAc...) asparagine" evidence="3">
    <location>
        <position position="362"/>
    </location>
</feature>
<feature type="glycosylation site" description="N-linked (GlcNAc...) asparagine" evidence="3">
    <location>
        <position position="501"/>
    </location>
</feature>
<comment type="function">
    <text evidence="2">Catalyzes the transfer of a single N-acetylglucosamine from UDP-GlcNAc to a serine or threonine residue in extracellular proteins resulting in their modification with a beta-linked N-acetylglucosamine (O-GlcNAc). Specifically glycosylates the Thr residue located between the fifth and sixth conserved cysteines of folded EGF-like domains.</text>
</comment>
<comment type="catalytic activity">
    <reaction evidence="2">
        <text>L-seryl-[protein] + UDP-N-acetyl-alpha-D-glucosamine = 3-O-(N-acetyl-beta-D-glucosaminyl)-L-seryl-[protein] + UDP + H(+)</text>
        <dbReference type="Rhea" id="RHEA:48904"/>
        <dbReference type="Rhea" id="RHEA-COMP:9863"/>
        <dbReference type="Rhea" id="RHEA-COMP:12251"/>
        <dbReference type="ChEBI" id="CHEBI:15378"/>
        <dbReference type="ChEBI" id="CHEBI:29999"/>
        <dbReference type="ChEBI" id="CHEBI:57705"/>
        <dbReference type="ChEBI" id="CHEBI:58223"/>
        <dbReference type="ChEBI" id="CHEBI:90838"/>
        <dbReference type="EC" id="2.4.1.255"/>
    </reaction>
</comment>
<comment type="catalytic activity">
    <reaction evidence="2">
        <text>L-threonyl-[protein] + UDP-N-acetyl-alpha-D-glucosamine = 3-O-(N-acetyl-beta-D-glucosaminyl)-L-threonyl-[protein] + UDP + H(+)</text>
        <dbReference type="Rhea" id="RHEA:48908"/>
        <dbReference type="Rhea" id="RHEA-COMP:11060"/>
        <dbReference type="Rhea" id="RHEA-COMP:12252"/>
        <dbReference type="ChEBI" id="CHEBI:15378"/>
        <dbReference type="ChEBI" id="CHEBI:30013"/>
        <dbReference type="ChEBI" id="CHEBI:57705"/>
        <dbReference type="ChEBI" id="CHEBI:58223"/>
        <dbReference type="ChEBI" id="CHEBI:90840"/>
        <dbReference type="EC" id="2.4.1.255"/>
    </reaction>
</comment>
<comment type="subcellular location">
    <subcellularLocation>
        <location evidence="1">Endoplasmic reticulum lumen</location>
    </subcellularLocation>
</comment>
<comment type="similarity">
    <text evidence="4">Belongs to the glycosyltransferase 61 family.</text>
</comment>
<gene>
    <name type="primary">EOGT</name>
    <name type="synonym">AER61</name>
</gene>
<organism>
    <name type="scientific">Gallus gallus</name>
    <name type="common">Chicken</name>
    <dbReference type="NCBI Taxonomy" id="9031"/>
    <lineage>
        <taxon>Eukaryota</taxon>
        <taxon>Metazoa</taxon>
        <taxon>Chordata</taxon>
        <taxon>Craniata</taxon>
        <taxon>Vertebrata</taxon>
        <taxon>Euteleostomi</taxon>
        <taxon>Archelosauria</taxon>
        <taxon>Archosauria</taxon>
        <taxon>Dinosauria</taxon>
        <taxon>Saurischia</taxon>
        <taxon>Theropoda</taxon>
        <taxon>Coelurosauria</taxon>
        <taxon>Aves</taxon>
        <taxon>Neognathae</taxon>
        <taxon>Galloanserae</taxon>
        <taxon>Galliformes</taxon>
        <taxon>Phasianidae</taxon>
        <taxon>Phasianinae</taxon>
        <taxon>Gallus</taxon>
    </lineage>
</organism>
<sequence>MFILLMFVLLLQEILANSRDENLTELNSVLEEPTYSYRAINLPAEHIPYFLHNNRHIAGICKQDSRCPYKVGFYFVLHKYLKKLKSCWGYEKSCKSDYRFSYPVCDYVESGWANDIETAQQIFWKQADFGYIRERLNEMKTHCKPTVTGDSSLTCSQFLQHCRATNLYIDLRTAKRNHERFKEDFFQKGEIGGHCTLDVKAFLAEGQRKSPLQSWFAELQTFTSLNFRPLDDGKCDIVIEKPTYFMKLDAGVNMYHHFCDFVNLYITQHINNSFSTDVNIVMWDTSSYGYGDLFSETWKAFTDYDIIYLKTFDSKRVCFKEAVFSLLPRMRYGLFYNTPLISGCHGTGLFRAFSQHVLHRLNITQEGPKDGKIRVTILARSTDYRKILNQNELVNALKTVSTLEVKVVDYKYKELEFSEQLRITHNSDIFIGMHGAGLTHLLFLPDWAVVFELYNCEDERCYLDLARLRGIHYITWRKRNKVFPQDQGHHPTLGEHPKFTNYSFDVEEFMYLVLLAANHVSQHSKWPFRVKHDEF</sequence>
<keyword id="KW-0256">Endoplasmic reticulum</keyword>
<keyword id="KW-0325">Glycoprotein</keyword>
<keyword id="KW-0328">Glycosyltransferase</keyword>
<keyword id="KW-1185">Reference proteome</keyword>
<keyword id="KW-0732">Signal</keyword>
<keyword id="KW-0808">Transferase</keyword>
<reference key="1">
    <citation type="journal article" date="2002" name="Curr. Biol.">
        <title>A comprehensive collection of chicken cDNAs.</title>
        <authorList>
            <person name="Boardman P.E."/>
            <person name="Sanz-Ezquerro J."/>
            <person name="Overton I.M."/>
            <person name="Burt D.W."/>
            <person name="Bosch E."/>
            <person name="Fong W.T."/>
            <person name="Tickle C."/>
            <person name="Brown W.R."/>
            <person name="Wilson S.A."/>
            <person name="Hubbard S.J."/>
        </authorList>
    </citation>
    <scope>NUCLEOTIDE SEQUENCE [LARGE SCALE MRNA] OF 1-70</scope>
    <source>
        <tissue>Abdominal adipose tissue</tissue>
    </source>
</reference>
<reference key="2">
    <citation type="submission" date="2004-12" db="EMBL/GenBank/DDBJ databases">
        <title>Phylogeny of xylosyltransferases.</title>
        <authorList>
            <person name="Kiefer-Meyer M.C."/>
            <person name="Pagny S."/>
            <person name="Durambure G."/>
            <person name="Faye L."/>
            <person name="Gomord V."/>
            <person name="Mollicone R."/>
            <person name="Oriol R."/>
        </authorList>
    </citation>
    <scope>NUCLEOTIDE SEQUENCE [MRNA] OF 6-535</scope>
</reference>
<protein>
    <recommendedName>
        <fullName>EGF domain-specific O-linked N-acetylglucosamine transferase</fullName>
        <ecNumber evidence="2">2.4.1.255</ecNumber>
    </recommendedName>
    <alternativeName>
        <fullName>Extracellular O-linked N-acetylglucosamine transferase</fullName>
    </alternativeName>
</protein>